<sequence length="158" mass="18613">MQGRLSAWLVKHGLIHRSLGFDYQGIETLQIKSEDWHSIAVILYVYGYNYLRSQCAYDVAPGGLLASVYHLTRIEYGVDQPEEVCIKVFVSRRNPRIPSVFWVWKSVDFQERESYDMLGISYDNHPRLKRILMPESWIGWPLRKDYVAPNFYEIQDAH</sequence>
<feature type="chain" id="PRO_0000358256" description="NAD(P)H-quinone oxidoreductase subunit J, chloroplastic">
    <location>
        <begin position="1"/>
        <end position="158"/>
    </location>
</feature>
<gene>
    <name evidence="1" type="primary">ndhJ</name>
</gene>
<accession>A0A338</accession>
<dbReference type="EC" id="7.1.1.-" evidence="1"/>
<dbReference type="EMBL" id="EF044213">
    <property type="protein sequence ID" value="ABJ89682.1"/>
    <property type="molecule type" value="Genomic_DNA"/>
</dbReference>
<dbReference type="RefSeq" id="YP_817485.1">
    <property type="nucleotide sequence ID" value="NC_008535.1"/>
</dbReference>
<dbReference type="SMR" id="A0A338"/>
<dbReference type="GeneID" id="4421832"/>
<dbReference type="OrthoDB" id="1909959at2759"/>
<dbReference type="Proteomes" id="UP000515148">
    <property type="component" value="Chloroplast Pltd"/>
</dbReference>
<dbReference type="GO" id="GO:0009535">
    <property type="term" value="C:chloroplast thylakoid membrane"/>
    <property type="evidence" value="ECO:0007669"/>
    <property type="project" value="UniProtKB-SubCell"/>
</dbReference>
<dbReference type="GO" id="GO:0008137">
    <property type="term" value="F:NADH dehydrogenase (ubiquinone) activity"/>
    <property type="evidence" value="ECO:0007669"/>
    <property type="project" value="InterPro"/>
</dbReference>
<dbReference type="GO" id="GO:0048038">
    <property type="term" value="F:quinone binding"/>
    <property type="evidence" value="ECO:0007669"/>
    <property type="project" value="UniProtKB-KW"/>
</dbReference>
<dbReference type="GO" id="GO:0019684">
    <property type="term" value="P:photosynthesis, light reaction"/>
    <property type="evidence" value="ECO:0007669"/>
    <property type="project" value="UniProtKB-UniRule"/>
</dbReference>
<dbReference type="FunFam" id="3.30.460.80:FF:000004">
    <property type="entry name" value="NAD(P)H-quinone oxidoreductase subunit J, chloroplastic"/>
    <property type="match status" value="1"/>
</dbReference>
<dbReference type="Gene3D" id="3.30.460.80">
    <property type="entry name" value="NADH:ubiquinone oxidoreductase, 30kDa subunit"/>
    <property type="match status" value="1"/>
</dbReference>
<dbReference type="HAMAP" id="MF_01357">
    <property type="entry name" value="NDH1_NuoC"/>
    <property type="match status" value="1"/>
</dbReference>
<dbReference type="InterPro" id="IPR010218">
    <property type="entry name" value="NADH_DH_suC"/>
</dbReference>
<dbReference type="InterPro" id="IPR037232">
    <property type="entry name" value="NADH_quin_OxRdtase_su_C/D-like"/>
</dbReference>
<dbReference type="InterPro" id="IPR001268">
    <property type="entry name" value="NADH_UbQ_OxRdtase_30kDa_su"/>
</dbReference>
<dbReference type="InterPro" id="IPR020396">
    <property type="entry name" value="NADH_UbQ_OxRdtase_CS"/>
</dbReference>
<dbReference type="NCBIfam" id="NF009141">
    <property type="entry name" value="PRK12494.1"/>
    <property type="match status" value="1"/>
</dbReference>
<dbReference type="PANTHER" id="PTHR10884:SF14">
    <property type="entry name" value="NADH DEHYDROGENASE [UBIQUINONE] IRON-SULFUR PROTEIN 3, MITOCHONDRIAL"/>
    <property type="match status" value="1"/>
</dbReference>
<dbReference type="PANTHER" id="PTHR10884">
    <property type="entry name" value="NADH DEHYDROGENASE UBIQUINONE IRON-SULFUR PROTEIN 3"/>
    <property type="match status" value="1"/>
</dbReference>
<dbReference type="Pfam" id="PF00329">
    <property type="entry name" value="Complex1_30kDa"/>
    <property type="match status" value="1"/>
</dbReference>
<dbReference type="SUPFAM" id="SSF143243">
    <property type="entry name" value="Nqo5-like"/>
    <property type="match status" value="1"/>
</dbReference>
<dbReference type="PROSITE" id="PS00542">
    <property type="entry name" value="COMPLEX1_30K"/>
    <property type="match status" value="1"/>
</dbReference>
<comment type="function">
    <text evidence="1">NDH shuttles electrons from NAD(P)H:plastoquinone, via FMN and iron-sulfur (Fe-S) centers, to quinones in the photosynthetic chain and possibly in a chloroplast respiratory chain. The immediate electron acceptor for the enzyme in this species is believed to be plastoquinone. Couples the redox reaction to proton translocation, and thus conserves the redox energy in a proton gradient.</text>
</comment>
<comment type="catalytic activity">
    <reaction evidence="1">
        <text>a plastoquinone + NADH + (n+1) H(+)(in) = a plastoquinol + NAD(+) + n H(+)(out)</text>
        <dbReference type="Rhea" id="RHEA:42608"/>
        <dbReference type="Rhea" id="RHEA-COMP:9561"/>
        <dbReference type="Rhea" id="RHEA-COMP:9562"/>
        <dbReference type="ChEBI" id="CHEBI:15378"/>
        <dbReference type="ChEBI" id="CHEBI:17757"/>
        <dbReference type="ChEBI" id="CHEBI:57540"/>
        <dbReference type="ChEBI" id="CHEBI:57945"/>
        <dbReference type="ChEBI" id="CHEBI:62192"/>
    </reaction>
</comment>
<comment type="catalytic activity">
    <reaction evidence="1">
        <text>a plastoquinone + NADPH + (n+1) H(+)(in) = a plastoquinol + NADP(+) + n H(+)(out)</text>
        <dbReference type="Rhea" id="RHEA:42612"/>
        <dbReference type="Rhea" id="RHEA-COMP:9561"/>
        <dbReference type="Rhea" id="RHEA-COMP:9562"/>
        <dbReference type="ChEBI" id="CHEBI:15378"/>
        <dbReference type="ChEBI" id="CHEBI:17757"/>
        <dbReference type="ChEBI" id="CHEBI:57783"/>
        <dbReference type="ChEBI" id="CHEBI:58349"/>
        <dbReference type="ChEBI" id="CHEBI:62192"/>
    </reaction>
</comment>
<comment type="subunit">
    <text evidence="1">NDH is composed of at least 16 different subunits, 5 of which are encoded in the nucleus.</text>
</comment>
<comment type="subcellular location">
    <subcellularLocation>
        <location evidence="1">Plastid</location>
        <location evidence="1">Chloroplast thylakoid membrane</location>
        <topology evidence="1">Peripheral membrane protein</topology>
        <orientation evidence="1">Stromal side</orientation>
    </subcellularLocation>
</comment>
<comment type="similarity">
    <text evidence="1">Belongs to the complex I 30 kDa subunit family.</text>
</comment>
<proteinExistence type="inferred from homology"/>
<protein>
    <recommendedName>
        <fullName evidence="1">NAD(P)H-quinone oxidoreductase subunit J, chloroplastic</fullName>
        <ecNumber evidence="1">7.1.1.-</ecNumber>
    </recommendedName>
    <alternativeName>
        <fullName>NAD(P)H dehydrogenase subunit J</fullName>
    </alternativeName>
    <alternativeName>
        <fullName evidence="1">NADH-plastoquinone oxidoreductase subunit J</fullName>
    </alternativeName>
</protein>
<name>NDHJ_COFAR</name>
<evidence type="ECO:0000255" key="1">
    <source>
        <dbReference type="HAMAP-Rule" id="MF_01357"/>
    </source>
</evidence>
<keyword id="KW-0150">Chloroplast</keyword>
<keyword id="KW-0472">Membrane</keyword>
<keyword id="KW-0520">NAD</keyword>
<keyword id="KW-0521">NADP</keyword>
<keyword id="KW-0934">Plastid</keyword>
<keyword id="KW-0618">Plastoquinone</keyword>
<keyword id="KW-0874">Quinone</keyword>
<keyword id="KW-1185">Reference proteome</keyword>
<keyword id="KW-0793">Thylakoid</keyword>
<keyword id="KW-1278">Translocase</keyword>
<keyword id="KW-0813">Transport</keyword>
<reference key="1">
    <citation type="journal article" date="2007" name="Plant Biotechnol. J.">
        <title>The complete nucleotide sequence of the coffee (Coffea arabica L.) chloroplast genome: organization and implications for biotechnology and phylogenetic relationships amongst angiosperms.</title>
        <authorList>
            <person name="Samson N."/>
            <person name="Bausher M.G."/>
            <person name="Lee S.-B."/>
            <person name="Jansen R.K."/>
            <person name="Daniell H."/>
        </authorList>
    </citation>
    <scope>NUCLEOTIDE SEQUENCE [LARGE SCALE GENOMIC DNA]</scope>
</reference>
<organism>
    <name type="scientific">Coffea arabica</name>
    <name type="common">Arabian coffee</name>
    <dbReference type="NCBI Taxonomy" id="13443"/>
    <lineage>
        <taxon>Eukaryota</taxon>
        <taxon>Viridiplantae</taxon>
        <taxon>Streptophyta</taxon>
        <taxon>Embryophyta</taxon>
        <taxon>Tracheophyta</taxon>
        <taxon>Spermatophyta</taxon>
        <taxon>Magnoliopsida</taxon>
        <taxon>eudicotyledons</taxon>
        <taxon>Gunneridae</taxon>
        <taxon>Pentapetalae</taxon>
        <taxon>asterids</taxon>
        <taxon>lamiids</taxon>
        <taxon>Gentianales</taxon>
        <taxon>Rubiaceae</taxon>
        <taxon>Ixoroideae</taxon>
        <taxon>Gardenieae complex</taxon>
        <taxon>Bertiereae - Coffeeae clade</taxon>
        <taxon>Coffeeae</taxon>
        <taxon>Coffea</taxon>
    </lineage>
</organism>
<geneLocation type="chloroplast"/>